<comment type="function">
    <text evidence="2">Styrene monooxygenase which catalyzes the first step in the aerobic styrene degradation pathway by enantioselective epoxidation of the vinyl side chain. In a two-component system, StyB reductase utilizes NADH to reduce FAD, which is then transferred to the oxygenase; the electron transfer is proposed to occur via a diffusing flavin.</text>
</comment>
<comment type="catalytic activity">
    <reaction evidence="2">
        <text>styrene + FADH2 + O2 = (S)-styrene oxide + FAD + H2O + H(+)</text>
        <dbReference type="Rhea" id="RHEA:31727"/>
        <dbReference type="ChEBI" id="CHEBI:15377"/>
        <dbReference type="ChEBI" id="CHEBI:15378"/>
        <dbReference type="ChEBI" id="CHEBI:15379"/>
        <dbReference type="ChEBI" id="CHEBI:27452"/>
        <dbReference type="ChEBI" id="CHEBI:51014"/>
        <dbReference type="ChEBI" id="CHEBI:57692"/>
        <dbReference type="ChEBI" id="CHEBI:58307"/>
        <dbReference type="EC" id="1.14.14.11"/>
    </reaction>
</comment>
<comment type="pathway">
    <text evidence="2">Aromatic compound metabolism.</text>
</comment>
<comment type="subunit">
    <text evidence="1">Homodimer. A direct interaction with the monooxygenase reductase component StyB seems not to be necessary for the enzymatic activity (By similarity).</text>
</comment>
<comment type="similarity">
    <text evidence="3">Belongs to the StyA family.</text>
</comment>
<feature type="chain" id="PRO_0000430448" description="Styrene monooxygenase StyA">
    <location>
        <begin position="1"/>
        <end position="415"/>
    </location>
</feature>
<proteinExistence type="evidence at protein level"/>
<name>STYA_PSEFL</name>
<organism>
    <name type="scientific">Pseudomonas fluorescens</name>
    <dbReference type="NCBI Taxonomy" id="294"/>
    <lineage>
        <taxon>Bacteria</taxon>
        <taxon>Pseudomonadati</taxon>
        <taxon>Pseudomonadota</taxon>
        <taxon>Gammaproteobacteria</taxon>
        <taxon>Pseudomonadales</taxon>
        <taxon>Pseudomonadaceae</taxon>
        <taxon>Pseudomonas</taxon>
    </lineage>
</organism>
<evidence type="ECO:0000250" key="1"/>
<evidence type="ECO:0000269" key="2">
    <source>
    </source>
</evidence>
<evidence type="ECO:0000305" key="3"/>
<gene>
    <name type="primary">styA</name>
</gene>
<reference key="1">
    <citation type="journal article" date="1997" name="Appl. Environ. Microbiol.">
        <title>Sequencing and functional analysis of styrene catabolism genes from Pseudomonas fluorescens ST.</title>
        <authorList>
            <person name="Beltrametti F."/>
            <person name="Marconi A.M."/>
            <person name="Bestetti G."/>
            <person name="Colombo C."/>
            <person name="Galli E."/>
            <person name="Ruzzi M."/>
            <person name="Zennaro E."/>
        </authorList>
    </citation>
    <scope>NUCLEOTIDE SEQUENCE [GENOMIC DNA]</scope>
    <scope>FUNCTION</scope>
    <scope>CATALYTIC ACTIVITY</scope>
    <scope>PATHWAY</scope>
    <source>
        <strain>ST</strain>
    </source>
</reference>
<dbReference type="EC" id="1.14.14.11"/>
<dbReference type="EMBL" id="Z92524">
    <property type="protein sequence ID" value="CAB06823.1"/>
    <property type="molecule type" value="Genomic_DNA"/>
</dbReference>
<dbReference type="SMR" id="O06834"/>
<dbReference type="BioCyc" id="MetaCyc:MONOMER-16946"/>
<dbReference type="GO" id="GO:0016712">
    <property type="term" value="F:oxidoreductase activity, acting on paired donors, with incorporation or reduction of molecular oxygen, reduced flavin or flavoprotein as one donor, and incorporation of one atom of oxygen"/>
    <property type="evidence" value="ECO:0000314"/>
    <property type="project" value="UniProtKB"/>
</dbReference>
<dbReference type="GO" id="GO:0042207">
    <property type="term" value="P:styrene catabolic process"/>
    <property type="evidence" value="ECO:0000314"/>
    <property type="project" value="UniProtKB"/>
</dbReference>
<dbReference type="FunFam" id="3.30.9.40:FF:000001">
    <property type="entry name" value="Styrene monooxygenase StyA"/>
    <property type="match status" value="1"/>
</dbReference>
<dbReference type="FunFam" id="3.30.9.40:FF:000002">
    <property type="entry name" value="Styrene monooxygenase StyA"/>
    <property type="match status" value="1"/>
</dbReference>
<dbReference type="Gene3D" id="3.30.9.40">
    <property type="match status" value="2"/>
</dbReference>
<dbReference type="Gene3D" id="6.10.250.650">
    <property type="match status" value="1"/>
</dbReference>
<dbReference type="Gene3D" id="3.50.50.60">
    <property type="entry name" value="FAD/NAD(P)-binding domain"/>
    <property type="match status" value="2"/>
</dbReference>
<dbReference type="InterPro" id="IPR036188">
    <property type="entry name" value="FAD/NAD-bd_sf"/>
</dbReference>
<dbReference type="InterPro" id="IPR041654">
    <property type="entry name" value="StyA_sbd"/>
</dbReference>
<dbReference type="InterPro" id="IPR054801">
    <property type="entry name" value="StyMonoxStyA"/>
</dbReference>
<dbReference type="NCBIfam" id="NF045732">
    <property type="entry name" value="StyMonoxStyA"/>
    <property type="match status" value="1"/>
</dbReference>
<dbReference type="Pfam" id="PF17885">
    <property type="entry name" value="Smoa_sbd"/>
    <property type="match status" value="1"/>
</dbReference>
<dbReference type="PRINTS" id="PR00420">
    <property type="entry name" value="RNGMNOXGNASE"/>
</dbReference>
<dbReference type="SUPFAM" id="SSF51905">
    <property type="entry name" value="FAD/NAD(P)-binding domain"/>
    <property type="match status" value="1"/>
</dbReference>
<protein>
    <recommendedName>
        <fullName>Styrene monooxygenase StyA</fullName>
        <ecNumber>1.14.14.11</ecNumber>
    </recommendedName>
    <alternativeName>
        <fullName>Styrene monooxygenase large component</fullName>
    </alternativeName>
</protein>
<sequence length="415" mass="46411">MKKRIGIVGAGTAGLHLGLFLRQHDVDVTVYTDRKPDEYSGLRLLNTVAHHAVTVQREVALDVNEWPSEEFGYFGHYYYVGGSQPMRFYGDLKAPSRAVDYRLYQPMLMRALEARGGKSCYDDVSTEDLEGLSEQYDLLVVCTGKNALGKVFEKQSENSPFEKPQRALCVGLFKGIKEAPIRAVTMSFSPGHGELIEIPTLSFNGMSTALVLENHIGSDLEVLAHTKYDDDPRAFLDLMLEKLRKHHPSVAERIDPAEFDLANSSLDILQGGVVPAFRDGHATLSNGKTIIGLGDVQATVDPVLGQGANMASHAAWILGEEILAHSVYDLRFSEHLERRRQDRVLCATRWTNFILSALSALPPEFLAFLQILSQSREMADEFTDNFNYPERQWDRFSSPERIGQWCNQYAPTIAA</sequence>
<keyword id="KW-0274">FAD</keyword>
<keyword id="KW-0285">Flavoprotein</keyword>
<keyword id="KW-0503">Monooxygenase</keyword>
<keyword id="KW-0560">Oxidoreductase</keyword>
<accession>O06834</accession>